<reference key="1">
    <citation type="submission" date="2007-04" db="EMBL/GenBank/DDBJ databases">
        <title>Complete sequence of Pseudomonas mendocina ymp.</title>
        <authorList>
            <consortium name="US DOE Joint Genome Institute"/>
            <person name="Copeland A."/>
            <person name="Lucas S."/>
            <person name="Lapidus A."/>
            <person name="Barry K."/>
            <person name="Glavina del Rio T."/>
            <person name="Dalin E."/>
            <person name="Tice H."/>
            <person name="Pitluck S."/>
            <person name="Kiss H."/>
            <person name="Brettin T."/>
            <person name="Detter J.C."/>
            <person name="Bruce D."/>
            <person name="Han C."/>
            <person name="Schmutz J."/>
            <person name="Larimer F."/>
            <person name="Land M."/>
            <person name="Hauser L."/>
            <person name="Kyrpides N."/>
            <person name="Mikhailova N."/>
            <person name="Hersman L."/>
            <person name="Dubois J."/>
            <person name="Maurice P."/>
            <person name="Richardson P."/>
        </authorList>
    </citation>
    <scope>NUCLEOTIDE SEQUENCE [LARGE SCALE GENOMIC DNA]</scope>
    <source>
        <strain>ymp</strain>
    </source>
</reference>
<accession>A4XWU1</accession>
<sequence length="247" mass="27179">MSQVNMRDMLKAGVHFGHQTRYWNPKMGKYIFGARNKIHIINLEKTLPMFNDALSFVEKLAAGKNKILFVGTKRSAGKIVREEAARCGSPFVDHRWLGGMLTNYKTIRASIKRLRELETQSQDGTFAKLTKKEALMRSRDLEKLDRSLGGIKDMGGLPDALFVIDVDHERIAITEANKLGIPVIGVVDTNSSPEGVDYIIPGNDDAIRAIQLYMGAMADAVIRGRSNAGGATEEFVEEAPAAESAEG</sequence>
<feature type="chain" id="PRO_1000004034" description="Small ribosomal subunit protein uS2">
    <location>
        <begin position="1"/>
        <end position="247"/>
    </location>
</feature>
<protein>
    <recommendedName>
        <fullName evidence="1">Small ribosomal subunit protein uS2</fullName>
    </recommendedName>
    <alternativeName>
        <fullName evidence="2">30S ribosomal protein S2</fullName>
    </alternativeName>
</protein>
<name>RS2_ECTM1</name>
<proteinExistence type="inferred from homology"/>
<dbReference type="EMBL" id="CP000680">
    <property type="protein sequence ID" value="ABP85807.1"/>
    <property type="molecule type" value="Genomic_DNA"/>
</dbReference>
<dbReference type="SMR" id="A4XWU1"/>
<dbReference type="STRING" id="399739.Pmen_3053"/>
<dbReference type="KEGG" id="pmy:Pmen_3053"/>
<dbReference type="PATRIC" id="fig|399739.8.peg.3099"/>
<dbReference type="eggNOG" id="COG0052">
    <property type="taxonomic scope" value="Bacteria"/>
</dbReference>
<dbReference type="HOGENOM" id="CLU_040318_1_0_6"/>
<dbReference type="OrthoDB" id="9808036at2"/>
<dbReference type="GO" id="GO:0022627">
    <property type="term" value="C:cytosolic small ribosomal subunit"/>
    <property type="evidence" value="ECO:0007669"/>
    <property type="project" value="TreeGrafter"/>
</dbReference>
<dbReference type="GO" id="GO:0003735">
    <property type="term" value="F:structural constituent of ribosome"/>
    <property type="evidence" value="ECO:0007669"/>
    <property type="project" value="InterPro"/>
</dbReference>
<dbReference type="GO" id="GO:0006412">
    <property type="term" value="P:translation"/>
    <property type="evidence" value="ECO:0007669"/>
    <property type="project" value="UniProtKB-UniRule"/>
</dbReference>
<dbReference type="CDD" id="cd01425">
    <property type="entry name" value="RPS2"/>
    <property type="match status" value="1"/>
</dbReference>
<dbReference type="FunFam" id="1.10.287.610:FF:000001">
    <property type="entry name" value="30S ribosomal protein S2"/>
    <property type="match status" value="1"/>
</dbReference>
<dbReference type="Gene3D" id="3.40.50.10490">
    <property type="entry name" value="Glucose-6-phosphate isomerase like protein, domain 1"/>
    <property type="match status" value="1"/>
</dbReference>
<dbReference type="Gene3D" id="1.10.287.610">
    <property type="entry name" value="Helix hairpin bin"/>
    <property type="match status" value="1"/>
</dbReference>
<dbReference type="HAMAP" id="MF_00291_B">
    <property type="entry name" value="Ribosomal_uS2_B"/>
    <property type="match status" value="1"/>
</dbReference>
<dbReference type="InterPro" id="IPR001865">
    <property type="entry name" value="Ribosomal_uS2"/>
</dbReference>
<dbReference type="InterPro" id="IPR005706">
    <property type="entry name" value="Ribosomal_uS2_bac/mit/plastid"/>
</dbReference>
<dbReference type="InterPro" id="IPR018130">
    <property type="entry name" value="Ribosomal_uS2_CS"/>
</dbReference>
<dbReference type="InterPro" id="IPR023591">
    <property type="entry name" value="Ribosomal_uS2_flav_dom_sf"/>
</dbReference>
<dbReference type="NCBIfam" id="TIGR01011">
    <property type="entry name" value="rpsB_bact"/>
    <property type="match status" value="1"/>
</dbReference>
<dbReference type="PANTHER" id="PTHR12534">
    <property type="entry name" value="30S RIBOSOMAL PROTEIN S2 PROKARYOTIC AND ORGANELLAR"/>
    <property type="match status" value="1"/>
</dbReference>
<dbReference type="PANTHER" id="PTHR12534:SF0">
    <property type="entry name" value="SMALL RIBOSOMAL SUBUNIT PROTEIN US2M"/>
    <property type="match status" value="1"/>
</dbReference>
<dbReference type="Pfam" id="PF00318">
    <property type="entry name" value="Ribosomal_S2"/>
    <property type="match status" value="1"/>
</dbReference>
<dbReference type="PRINTS" id="PR00395">
    <property type="entry name" value="RIBOSOMALS2"/>
</dbReference>
<dbReference type="SUPFAM" id="SSF52313">
    <property type="entry name" value="Ribosomal protein S2"/>
    <property type="match status" value="1"/>
</dbReference>
<dbReference type="PROSITE" id="PS00962">
    <property type="entry name" value="RIBOSOMAL_S2_1"/>
    <property type="match status" value="1"/>
</dbReference>
<dbReference type="PROSITE" id="PS00963">
    <property type="entry name" value="RIBOSOMAL_S2_2"/>
    <property type="match status" value="1"/>
</dbReference>
<evidence type="ECO:0000255" key="1">
    <source>
        <dbReference type="HAMAP-Rule" id="MF_00291"/>
    </source>
</evidence>
<evidence type="ECO:0000305" key="2"/>
<keyword id="KW-0687">Ribonucleoprotein</keyword>
<keyword id="KW-0689">Ribosomal protein</keyword>
<gene>
    <name evidence="1" type="primary">rpsB</name>
    <name type="ordered locus">Pmen_3053</name>
</gene>
<organism>
    <name type="scientific">Ectopseudomonas mendocina (strain ymp)</name>
    <name type="common">Pseudomonas mendocina</name>
    <dbReference type="NCBI Taxonomy" id="399739"/>
    <lineage>
        <taxon>Bacteria</taxon>
        <taxon>Pseudomonadati</taxon>
        <taxon>Pseudomonadota</taxon>
        <taxon>Gammaproteobacteria</taxon>
        <taxon>Pseudomonadales</taxon>
        <taxon>Pseudomonadaceae</taxon>
        <taxon>Ectopseudomonas</taxon>
    </lineage>
</organism>
<comment type="similarity">
    <text evidence="1">Belongs to the universal ribosomal protein uS2 family.</text>
</comment>